<accession>Q961G1</accession>
<accession>Q9VQQ8</accession>
<organism>
    <name type="scientific">Drosophila melanogaster</name>
    <name type="common">Fruit fly</name>
    <dbReference type="NCBI Taxonomy" id="7227"/>
    <lineage>
        <taxon>Eukaryota</taxon>
        <taxon>Metazoa</taxon>
        <taxon>Ecdysozoa</taxon>
        <taxon>Arthropoda</taxon>
        <taxon>Hexapoda</taxon>
        <taxon>Insecta</taxon>
        <taxon>Pterygota</taxon>
        <taxon>Neoptera</taxon>
        <taxon>Endopterygota</taxon>
        <taxon>Diptera</taxon>
        <taxon>Brachycera</taxon>
        <taxon>Muscomorpha</taxon>
        <taxon>Ephydroidea</taxon>
        <taxon>Drosophilidae</taxon>
        <taxon>Drosophila</taxon>
        <taxon>Sophophora</taxon>
    </lineage>
</organism>
<gene>
    <name type="primary">Cog3</name>
    <name type="ORF">CG3248</name>
</gene>
<dbReference type="EMBL" id="AE014134">
    <property type="protein sequence ID" value="AAF51107.2"/>
    <property type="molecule type" value="Genomic_DNA"/>
</dbReference>
<dbReference type="EMBL" id="AY051613">
    <property type="protein sequence ID" value="AAK93037.1"/>
    <property type="molecule type" value="mRNA"/>
</dbReference>
<dbReference type="RefSeq" id="NP_608779.1">
    <property type="nucleotide sequence ID" value="NM_134935.3"/>
</dbReference>
<dbReference type="SMR" id="Q961G1"/>
<dbReference type="BioGRID" id="59773">
    <property type="interactions" value="5"/>
</dbReference>
<dbReference type="ComplexPortal" id="CPX-2794">
    <property type="entry name" value="COG tethering complex"/>
</dbReference>
<dbReference type="DIP" id="DIP-23437N"/>
<dbReference type="FunCoup" id="Q961G1">
    <property type="interactions" value="1443"/>
</dbReference>
<dbReference type="IntAct" id="Q961G1">
    <property type="interactions" value="3"/>
</dbReference>
<dbReference type="STRING" id="7227.FBpp0077262"/>
<dbReference type="GlyGen" id="Q961G1">
    <property type="glycosylation" value="2 sites"/>
</dbReference>
<dbReference type="iPTMnet" id="Q961G1"/>
<dbReference type="PaxDb" id="7227-FBpp0077262"/>
<dbReference type="EnsemblMetazoa" id="FBtr0077573">
    <property type="protein sequence ID" value="FBpp0077262"/>
    <property type="gene ID" value="FBgn0031536"/>
</dbReference>
<dbReference type="GeneID" id="33562"/>
<dbReference type="KEGG" id="dme:Dmel_CG3248"/>
<dbReference type="UCSC" id="CG3248-RA">
    <property type="organism name" value="d. melanogaster"/>
</dbReference>
<dbReference type="AGR" id="FB:FBgn0031536"/>
<dbReference type="CTD" id="83548"/>
<dbReference type="FlyBase" id="FBgn0031536">
    <property type="gene designation" value="Cog3"/>
</dbReference>
<dbReference type="VEuPathDB" id="VectorBase:FBgn0031536"/>
<dbReference type="eggNOG" id="KOG2604">
    <property type="taxonomic scope" value="Eukaryota"/>
</dbReference>
<dbReference type="GeneTree" id="ENSGT00390000015682"/>
<dbReference type="HOGENOM" id="CLU_011639_1_1_1"/>
<dbReference type="InParanoid" id="Q961G1"/>
<dbReference type="OMA" id="DEFELWG"/>
<dbReference type="OrthoDB" id="296793at2759"/>
<dbReference type="PhylomeDB" id="Q961G1"/>
<dbReference type="Reactome" id="R-DME-6807878">
    <property type="pathway name" value="COPI-mediated anterograde transport"/>
</dbReference>
<dbReference type="Reactome" id="R-DME-6811438">
    <property type="pathway name" value="Intra-Golgi traffic"/>
</dbReference>
<dbReference type="Reactome" id="R-DME-6811440">
    <property type="pathway name" value="Retrograde transport at the Trans-Golgi-Network"/>
</dbReference>
<dbReference type="BioGRID-ORCS" id="33562">
    <property type="hits" value="0 hits in 1 CRISPR screen"/>
</dbReference>
<dbReference type="GenomeRNAi" id="33562"/>
<dbReference type="PRO" id="PR:Q961G1"/>
<dbReference type="Proteomes" id="UP000000803">
    <property type="component" value="Chromosome 2L"/>
</dbReference>
<dbReference type="Bgee" id="FBgn0031536">
    <property type="expression patterns" value="Expressed in adult midgut enterocyte in digestive tract and 67 other cell types or tissues"/>
</dbReference>
<dbReference type="GO" id="GO:0005801">
    <property type="term" value="C:cis-Golgi network"/>
    <property type="evidence" value="ECO:0007669"/>
    <property type="project" value="InterPro"/>
</dbReference>
<dbReference type="GO" id="GO:0000139">
    <property type="term" value="C:Golgi membrane"/>
    <property type="evidence" value="ECO:0007669"/>
    <property type="project" value="UniProtKB-SubCell"/>
</dbReference>
<dbReference type="GO" id="GO:0017119">
    <property type="term" value="C:Golgi transport complex"/>
    <property type="evidence" value="ECO:0000314"/>
    <property type="project" value="FlyBase"/>
</dbReference>
<dbReference type="GO" id="GO:0006888">
    <property type="term" value="P:endoplasmic reticulum to Golgi vesicle-mediated transport"/>
    <property type="evidence" value="ECO:0000250"/>
    <property type="project" value="UniProtKB"/>
</dbReference>
<dbReference type="GO" id="GO:0007030">
    <property type="term" value="P:Golgi organization"/>
    <property type="evidence" value="ECO:0000250"/>
    <property type="project" value="FlyBase"/>
</dbReference>
<dbReference type="GO" id="GO:0006891">
    <property type="term" value="P:intra-Golgi vesicle-mediated transport"/>
    <property type="evidence" value="ECO:0000250"/>
    <property type="project" value="UniProtKB"/>
</dbReference>
<dbReference type="GO" id="GO:0006886">
    <property type="term" value="P:intracellular protein transport"/>
    <property type="evidence" value="ECO:0007669"/>
    <property type="project" value="InterPro"/>
</dbReference>
<dbReference type="GO" id="GO:0007112">
    <property type="term" value="P:male meiosis cytokinesis"/>
    <property type="evidence" value="ECO:0000315"/>
    <property type="project" value="FlyBase"/>
</dbReference>
<dbReference type="InterPro" id="IPR048685">
    <property type="entry name" value="COG3_C"/>
</dbReference>
<dbReference type="InterPro" id="IPR048320">
    <property type="entry name" value="COG3_N"/>
</dbReference>
<dbReference type="InterPro" id="IPR007265">
    <property type="entry name" value="COG_su3"/>
</dbReference>
<dbReference type="PANTHER" id="PTHR13302">
    <property type="entry name" value="CONSERVED OLIGOMERIC GOLGI COMPLEX COMPONENT 3"/>
    <property type="match status" value="1"/>
</dbReference>
<dbReference type="PANTHER" id="PTHR13302:SF8">
    <property type="entry name" value="CONSERVED OLIGOMERIC GOLGI COMPLEX SUBUNIT 3"/>
    <property type="match status" value="1"/>
</dbReference>
<dbReference type="Pfam" id="PF20671">
    <property type="entry name" value="COG3_C"/>
    <property type="match status" value="1"/>
</dbReference>
<dbReference type="Pfam" id="PF04136">
    <property type="entry name" value="COG3_N"/>
    <property type="match status" value="1"/>
</dbReference>
<keyword id="KW-0333">Golgi apparatus</keyword>
<keyword id="KW-0472">Membrane</keyword>
<keyword id="KW-0597">Phosphoprotein</keyword>
<keyword id="KW-0653">Protein transport</keyword>
<keyword id="KW-1185">Reference proteome</keyword>
<keyword id="KW-0813">Transport</keyword>
<feature type="chain" id="PRO_0000213502" description="Conserved oligomeric Golgi complex subunit 3">
    <location>
        <begin position="1"/>
        <end position="905"/>
    </location>
</feature>
<feature type="region of interest" description="Disordered" evidence="2">
    <location>
        <begin position="49"/>
        <end position="78"/>
    </location>
</feature>
<feature type="region of interest" description="Disordered" evidence="2">
    <location>
        <begin position="884"/>
        <end position="905"/>
    </location>
</feature>
<feature type="compositionally biased region" description="Polar residues" evidence="2">
    <location>
        <begin position="64"/>
        <end position="78"/>
    </location>
</feature>
<feature type="modified residue" description="Phosphoserine" evidence="3">
    <location>
        <position position="841"/>
    </location>
</feature>
<feature type="modified residue" description="Phosphoserine" evidence="3">
    <location>
        <position position="845"/>
    </location>
</feature>
<feature type="modified residue" description="Phosphoserine" evidence="3">
    <location>
        <position position="856"/>
    </location>
</feature>
<feature type="modified residue" description="Phosphoserine" evidence="3">
    <location>
        <position position="859"/>
    </location>
</feature>
<feature type="modified residue" description="Phosphoserine" evidence="3">
    <location>
        <position position="862"/>
    </location>
</feature>
<sequence length="905" mass="101240">MDDVERIQSENENLRKIRNRLMQWESKTDPLAALSIQQEEHLDVLTNLWRDSGPSAPAPTTPTQVGPTDSSAAATSQSGDDIRLPAEGLQNTNEFLLWFADVSAEIEQRGDADYHKYLQQLEQRKAECSHMLDQIAGAMERLGALCDEYDFVSQKTSALNTASEQLIEEQERLQELSHEIQRRLHYFSQVELLNQRLQSPTLSVASEAFRECLNKIDECLNYIEENPKFKDAAAYNVKYRQCLAKASGLVRNYVTSVINQATEATLHPKNNMPDASAALKAPDAAFALYYGKYQTAAAKVKRVAQLIESRSEHSLDYAQLMADLQQHYLAQRASVMSPAVNLSIQNVKVAHKGDHCSLTRSACAFLVHVCQDEQRLFYQFFSTGAPHLTVYLEGLCTILYDTMRPFIIHINHLETLAEICSILRIEMLEEHVQQNPVALEAFATIAHQLLQDVQERLVFRAHLYLQSDIQNFNPSSGDLAYPEKLEMMESIALSLQEPAPLRRSDSRNSMVSSVSSAVETESVATAYTVKQMNSPADLHGMWYPTVRRTLVCLSRLYRCVDRPIFQGLSQEALKLCIQSVSHAAGKISANKTPIDGELFEIKHLLILREQIAPFRVDFTVKETSLDFSKVKTAAFGLLQKRKQLFSMGSNNALLEFLLEGTPQIKEHLLDSRKEVDRQLKSVCEKYIKDAVQMLVGPLITFLEKAQSLLAQSTPATPQSPESTKASYVLRQSPWASPQQISSIIQETQRLIKAKLAVLQRSMQLYLSNRDTEFIIFRPIRNNIIQSFVKLEQLLTTNGYSTDDMIITSCPSAEQVSILLSSASILAAEGVASFAAAARKISTSSSVEGSTVGRKLSAMSNKSELVEEPKVEEVAGQIEVVPAEVQPPAKIEEEEVTETQTQANSE</sequence>
<proteinExistence type="evidence at protein level"/>
<name>COG3_DROME</name>
<comment type="function">
    <text evidence="1">Involved in ER-Golgi transport.</text>
</comment>
<comment type="subunit">
    <text evidence="1">Component of the conserved oligomeric Golgi complex which is composed of eight different subunits and is required for normal Golgi morphology and localization.</text>
</comment>
<comment type="subcellular location">
    <subcellularLocation>
        <location evidence="1">Golgi apparatus membrane</location>
        <topology evidence="1">Peripheral membrane protein</topology>
        <orientation evidence="1">Cytoplasmic side</orientation>
    </subcellularLocation>
</comment>
<comment type="similarity">
    <text evidence="4">Belongs to the COG3 family.</text>
</comment>
<protein>
    <recommendedName>
        <fullName>Conserved oligomeric Golgi complex subunit 3</fullName>
        <shortName>COG complex subunit 3</shortName>
    </recommendedName>
    <alternativeName>
        <fullName>Component of oligomeric Golgi complex 3</fullName>
    </alternativeName>
</protein>
<evidence type="ECO:0000250" key="1"/>
<evidence type="ECO:0000256" key="2">
    <source>
        <dbReference type="SAM" id="MobiDB-lite"/>
    </source>
</evidence>
<evidence type="ECO:0000269" key="3">
    <source>
    </source>
</evidence>
<evidence type="ECO:0000305" key="4"/>
<reference key="1">
    <citation type="journal article" date="2000" name="Science">
        <title>The genome sequence of Drosophila melanogaster.</title>
        <authorList>
            <person name="Adams M.D."/>
            <person name="Celniker S.E."/>
            <person name="Holt R.A."/>
            <person name="Evans C.A."/>
            <person name="Gocayne J.D."/>
            <person name="Amanatides P.G."/>
            <person name="Scherer S.E."/>
            <person name="Li P.W."/>
            <person name="Hoskins R.A."/>
            <person name="Galle R.F."/>
            <person name="George R.A."/>
            <person name="Lewis S.E."/>
            <person name="Richards S."/>
            <person name="Ashburner M."/>
            <person name="Henderson S.N."/>
            <person name="Sutton G.G."/>
            <person name="Wortman J.R."/>
            <person name="Yandell M.D."/>
            <person name="Zhang Q."/>
            <person name="Chen L.X."/>
            <person name="Brandon R.C."/>
            <person name="Rogers Y.-H.C."/>
            <person name="Blazej R.G."/>
            <person name="Champe M."/>
            <person name="Pfeiffer B.D."/>
            <person name="Wan K.H."/>
            <person name="Doyle C."/>
            <person name="Baxter E.G."/>
            <person name="Helt G."/>
            <person name="Nelson C.R."/>
            <person name="Miklos G.L.G."/>
            <person name="Abril J.F."/>
            <person name="Agbayani A."/>
            <person name="An H.-J."/>
            <person name="Andrews-Pfannkoch C."/>
            <person name="Baldwin D."/>
            <person name="Ballew R.M."/>
            <person name="Basu A."/>
            <person name="Baxendale J."/>
            <person name="Bayraktaroglu L."/>
            <person name="Beasley E.M."/>
            <person name="Beeson K.Y."/>
            <person name="Benos P.V."/>
            <person name="Berman B.P."/>
            <person name="Bhandari D."/>
            <person name="Bolshakov S."/>
            <person name="Borkova D."/>
            <person name="Botchan M.R."/>
            <person name="Bouck J."/>
            <person name="Brokstein P."/>
            <person name="Brottier P."/>
            <person name="Burtis K.C."/>
            <person name="Busam D.A."/>
            <person name="Butler H."/>
            <person name="Cadieu E."/>
            <person name="Center A."/>
            <person name="Chandra I."/>
            <person name="Cherry J.M."/>
            <person name="Cawley S."/>
            <person name="Dahlke C."/>
            <person name="Davenport L.B."/>
            <person name="Davies P."/>
            <person name="de Pablos B."/>
            <person name="Delcher A."/>
            <person name="Deng Z."/>
            <person name="Mays A.D."/>
            <person name="Dew I."/>
            <person name="Dietz S.M."/>
            <person name="Dodson K."/>
            <person name="Doup L.E."/>
            <person name="Downes M."/>
            <person name="Dugan-Rocha S."/>
            <person name="Dunkov B.C."/>
            <person name="Dunn P."/>
            <person name="Durbin K.J."/>
            <person name="Evangelista C.C."/>
            <person name="Ferraz C."/>
            <person name="Ferriera S."/>
            <person name="Fleischmann W."/>
            <person name="Fosler C."/>
            <person name="Gabrielian A.E."/>
            <person name="Garg N.S."/>
            <person name="Gelbart W.M."/>
            <person name="Glasser K."/>
            <person name="Glodek A."/>
            <person name="Gong F."/>
            <person name="Gorrell J.H."/>
            <person name="Gu Z."/>
            <person name="Guan P."/>
            <person name="Harris M."/>
            <person name="Harris N.L."/>
            <person name="Harvey D.A."/>
            <person name="Heiman T.J."/>
            <person name="Hernandez J.R."/>
            <person name="Houck J."/>
            <person name="Hostin D."/>
            <person name="Houston K.A."/>
            <person name="Howland T.J."/>
            <person name="Wei M.-H."/>
            <person name="Ibegwam C."/>
            <person name="Jalali M."/>
            <person name="Kalush F."/>
            <person name="Karpen G.H."/>
            <person name="Ke Z."/>
            <person name="Kennison J.A."/>
            <person name="Ketchum K.A."/>
            <person name="Kimmel B.E."/>
            <person name="Kodira C.D."/>
            <person name="Kraft C.L."/>
            <person name="Kravitz S."/>
            <person name="Kulp D."/>
            <person name="Lai Z."/>
            <person name="Lasko P."/>
            <person name="Lei Y."/>
            <person name="Levitsky A.A."/>
            <person name="Li J.H."/>
            <person name="Li Z."/>
            <person name="Liang Y."/>
            <person name="Lin X."/>
            <person name="Liu X."/>
            <person name="Mattei B."/>
            <person name="McIntosh T.C."/>
            <person name="McLeod M.P."/>
            <person name="McPherson D."/>
            <person name="Merkulov G."/>
            <person name="Milshina N.V."/>
            <person name="Mobarry C."/>
            <person name="Morris J."/>
            <person name="Moshrefi A."/>
            <person name="Mount S.M."/>
            <person name="Moy M."/>
            <person name="Murphy B."/>
            <person name="Murphy L."/>
            <person name="Muzny D.M."/>
            <person name="Nelson D.L."/>
            <person name="Nelson D.R."/>
            <person name="Nelson K.A."/>
            <person name="Nixon K."/>
            <person name="Nusskern D.R."/>
            <person name="Pacleb J.M."/>
            <person name="Palazzolo M."/>
            <person name="Pittman G.S."/>
            <person name="Pan S."/>
            <person name="Pollard J."/>
            <person name="Puri V."/>
            <person name="Reese M.G."/>
            <person name="Reinert K."/>
            <person name="Remington K."/>
            <person name="Saunders R.D.C."/>
            <person name="Scheeler F."/>
            <person name="Shen H."/>
            <person name="Shue B.C."/>
            <person name="Siden-Kiamos I."/>
            <person name="Simpson M."/>
            <person name="Skupski M.P."/>
            <person name="Smith T.J."/>
            <person name="Spier E."/>
            <person name="Spradling A.C."/>
            <person name="Stapleton M."/>
            <person name="Strong R."/>
            <person name="Sun E."/>
            <person name="Svirskas R."/>
            <person name="Tector C."/>
            <person name="Turner R."/>
            <person name="Venter E."/>
            <person name="Wang A.H."/>
            <person name="Wang X."/>
            <person name="Wang Z.-Y."/>
            <person name="Wassarman D.A."/>
            <person name="Weinstock G.M."/>
            <person name="Weissenbach J."/>
            <person name="Williams S.M."/>
            <person name="Woodage T."/>
            <person name="Worley K.C."/>
            <person name="Wu D."/>
            <person name="Yang S."/>
            <person name="Yao Q.A."/>
            <person name="Ye J."/>
            <person name="Yeh R.-F."/>
            <person name="Zaveri J.S."/>
            <person name="Zhan M."/>
            <person name="Zhang G."/>
            <person name="Zhao Q."/>
            <person name="Zheng L."/>
            <person name="Zheng X.H."/>
            <person name="Zhong F.N."/>
            <person name="Zhong W."/>
            <person name="Zhou X."/>
            <person name="Zhu S.C."/>
            <person name="Zhu X."/>
            <person name="Smith H.O."/>
            <person name="Gibbs R.A."/>
            <person name="Myers E.W."/>
            <person name="Rubin G.M."/>
            <person name="Venter J.C."/>
        </authorList>
    </citation>
    <scope>NUCLEOTIDE SEQUENCE [LARGE SCALE GENOMIC DNA]</scope>
    <source>
        <strain>Berkeley</strain>
    </source>
</reference>
<reference key="2">
    <citation type="journal article" date="2002" name="Genome Biol.">
        <title>Annotation of the Drosophila melanogaster euchromatic genome: a systematic review.</title>
        <authorList>
            <person name="Misra S."/>
            <person name="Crosby M.A."/>
            <person name="Mungall C.J."/>
            <person name="Matthews B.B."/>
            <person name="Campbell K.S."/>
            <person name="Hradecky P."/>
            <person name="Huang Y."/>
            <person name="Kaminker J.S."/>
            <person name="Millburn G.H."/>
            <person name="Prochnik S.E."/>
            <person name="Smith C.D."/>
            <person name="Tupy J.L."/>
            <person name="Whitfield E.J."/>
            <person name="Bayraktaroglu L."/>
            <person name="Berman B.P."/>
            <person name="Bettencourt B.R."/>
            <person name="Celniker S.E."/>
            <person name="de Grey A.D.N.J."/>
            <person name="Drysdale R.A."/>
            <person name="Harris N.L."/>
            <person name="Richter J."/>
            <person name="Russo S."/>
            <person name="Schroeder A.J."/>
            <person name="Shu S.Q."/>
            <person name="Stapleton M."/>
            <person name="Yamada C."/>
            <person name="Ashburner M."/>
            <person name="Gelbart W.M."/>
            <person name="Rubin G.M."/>
            <person name="Lewis S.E."/>
        </authorList>
    </citation>
    <scope>GENOME REANNOTATION</scope>
    <source>
        <strain>Berkeley</strain>
    </source>
</reference>
<reference key="3">
    <citation type="journal article" date="2002" name="Genome Biol.">
        <title>A Drosophila full-length cDNA resource.</title>
        <authorList>
            <person name="Stapleton M."/>
            <person name="Carlson J.W."/>
            <person name="Brokstein P."/>
            <person name="Yu C."/>
            <person name="Champe M."/>
            <person name="George R.A."/>
            <person name="Guarin H."/>
            <person name="Kronmiller B."/>
            <person name="Pacleb J.M."/>
            <person name="Park S."/>
            <person name="Wan K.H."/>
            <person name="Rubin G.M."/>
            <person name="Celniker S.E."/>
        </authorList>
    </citation>
    <scope>NUCLEOTIDE SEQUENCE [LARGE SCALE MRNA]</scope>
    <source>
        <strain>Berkeley</strain>
        <tissue>Head</tissue>
    </source>
</reference>
<reference key="4">
    <citation type="journal article" date="2008" name="J. Proteome Res.">
        <title>Phosphoproteome analysis of Drosophila melanogaster embryos.</title>
        <authorList>
            <person name="Zhai B."/>
            <person name="Villen J."/>
            <person name="Beausoleil S.A."/>
            <person name="Mintseris J."/>
            <person name="Gygi S.P."/>
        </authorList>
    </citation>
    <scope>PHOSPHORYLATION [LARGE SCALE ANALYSIS] AT SER-841; SER-845; SER-856; SER-859 AND SER-862</scope>
    <scope>IDENTIFICATION BY MASS SPECTROMETRY</scope>
    <source>
        <tissue>Embryo</tissue>
    </source>
</reference>